<reference key="1">
    <citation type="journal article" date="2001" name="Proc. Natl. Acad. Sci. U.S.A.">
        <title>Analysis of the chromosome sequence of the legume symbiont Sinorhizobium meliloti strain 1021.</title>
        <authorList>
            <person name="Capela D."/>
            <person name="Barloy-Hubler F."/>
            <person name="Gouzy J."/>
            <person name="Bothe G."/>
            <person name="Ampe F."/>
            <person name="Batut J."/>
            <person name="Boistard P."/>
            <person name="Becker A."/>
            <person name="Boutry M."/>
            <person name="Cadieu E."/>
            <person name="Dreano S."/>
            <person name="Gloux S."/>
            <person name="Godrie T."/>
            <person name="Goffeau A."/>
            <person name="Kahn D."/>
            <person name="Kiss E."/>
            <person name="Lelaure V."/>
            <person name="Masuy D."/>
            <person name="Pohl T."/>
            <person name="Portetelle D."/>
            <person name="Puehler A."/>
            <person name="Purnelle B."/>
            <person name="Ramsperger U."/>
            <person name="Renard C."/>
            <person name="Thebault P."/>
            <person name="Vandenbol M."/>
            <person name="Weidner S."/>
            <person name="Galibert F."/>
        </authorList>
    </citation>
    <scope>NUCLEOTIDE SEQUENCE [LARGE SCALE GENOMIC DNA]</scope>
    <source>
        <strain>1021</strain>
    </source>
</reference>
<reference key="2">
    <citation type="journal article" date="2001" name="Science">
        <title>The composite genome of the legume symbiont Sinorhizobium meliloti.</title>
        <authorList>
            <person name="Galibert F."/>
            <person name="Finan T.M."/>
            <person name="Long S.R."/>
            <person name="Puehler A."/>
            <person name="Abola P."/>
            <person name="Ampe F."/>
            <person name="Barloy-Hubler F."/>
            <person name="Barnett M.J."/>
            <person name="Becker A."/>
            <person name="Boistard P."/>
            <person name="Bothe G."/>
            <person name="Boutry M."/>
            <person name="Bowser L."/>
            <person name="Buhrmester J."/>
            <person name="Cadieu E."/>
            <person name="Capela D."/>
            <person name="Chain P."/>
            <person name="Cowie A."/>
            <person name="Davis R.W."/>
            <person name="Dreano S."/>
            <person name="Federspiel N.A."/>
            <person name="Fisher R.F."/>
            <person name="Gloux S."/>
            <person name="Godrie T."/>
            <person name="Goffeau A."/>
            <person name="Golding B."/>
            <person name="Gouzy J."/>
            <person name="Gurjal M."/>
            <person name="Hernandez-Lucas I."/>
            <person name="Hong A."/>
            <person name="Huizar L."/>
            <person name="Hyman R.W."/>
            <person name="Jones T."/>
            <person name="Kahn D."/>
            <person name="Kahn M.L."/>
            <person name="Kalman S."/>
            <person name="Keating D.H."/>
            <person name="Kiss E."/>
            <person name="Komp C."/>
            <person name="Lelaure V."/>
            <person name="Masuy D."/>
            <person name="Palm C."/>
            <person name="Peck M.C."/>
            <person name="Pohl T.M."/>
            <person name="Portetelle D."/>
            <person name="Purnelle B."/>
            <person name="Ramsperger U."/>
            <person name="Surzycki R."/>
            <person name="Thebault P."/>
            <person name="Vandenbol M."/>
            <person name="Vorhoelter F.J."/>
            <person name="Weidner S."/>
            <person name="Wells D.H."/>
            <person name="Wong K."/>
            <person name="Yeh K.-C."/>
            <person name="Batut J."/>
        </authorList>
    </citation>
    <scope>NUCLEOTIDE SEQUENCE [LARGE SCALE GENOMIC DNA]</scope>
    <source>
        <strain>1021</strain>
    </source>
</reference>
<dbReference type="EC" id="2.4.2.-" evidence="1"/>
<dbReference type="EC" id="2.4.2.22" evidence="1"/>
<dbReference type="EMBL" id="AL591688">
    <property type="protein sequence ID" value="CAC46216.1"/>
    <property type="molecule type" value="Genomic_DNA"/>
</dbReference>
<dbReference type="RefSeq" id="NP_385743.1">
    <property type="nucleotide sequence ID" value="NC_003047.1"/>
</dbReference>
<dbReference type="RefSeq" id="WP_010969362.1">
    <property type="nucleotide sequence ID" value="NC_003047.1"/>
</dbReference>
<dbReference type="SMR" id="Q92PU1"/>
<dbReference type="EnsemblBacteria" id="CAC46216">
    <property type="protein sequence ID" value="CAC46216"/>
    <property type="gene ID" value="SMc00945"/>
</dbReference>
<dbReference type="KEGG" id="sme:SMc00945"/>
<dbReference type="PATRIC" id="fig|266834.11.peg.3070"/>
<dbReference type="eggNOG" id="COG2236">
    <property type="taxonomic scope" value="Bacteria"/>
</dbReference>
<dbReference type="HOGENOM" id="CLU_080904_3_0_5"/>
<dbReference type="OrthoDB" id="9789690at2"/>
<dbReference type="UniPathway" id="UPA00602">
    <property type="reaction ID" value="UER00658"/>
</dbReference>
<dbReference type="UniPathway" id="UPA00909">
    <property type="reaction ID" value="UER00887"/>
</dbReference>
<dbReference type="Proteomes" id="UP000001976">
    <property type="component" value="Chromosome"/>
</dbReference>
<dbReference type="GO" id="GO:0005886">
    <property type="term" value="C:plasma membrane"/>
    <property type="evidence" value="ECO:0007669"/>
    <property type="project" value="UniProtKB-SubCell"/>
</dbReference>
<dbReference type="GO" id="GO:0052657">
    <property type="term" value="F:guanine phosphoribosyltransferase activity"/>
    <property type="evidence" value="ECO:0007669"/>
    <property type="project" value="RHEA"/>
</dbReference>
<dbReference type="GO" id="GO:0004422">
    <property type="term" value="F:hypoxanthine phosphoribosyltransferase activity"/>
    <property type="evidence" value="ECO:0007669"/>
    <property type="project" value="RHEA"/>
</dbReference>
<dbReference type="GO" id="GO:0000287">
    <property type="term" value="F:magnesium ion binding"/>
    <property type="evidence" value="ECO:0007669"/>
    <property type="project" value="UniProtKB-UniRule"/>
</dbReference>
<dbReference type="GO" id="GO:0000310">
    <property type="term" value="F:xanthine phosphoribosyltransferase activity"/>
    <property type="evidence" value="ECO:0007669"/>
    <property type="project" value="UniProtKB-UniRule"/>
</dbReference>
<dbReference type="GO" id="GO:0032263">
    <property type="term" value="P:GMP salvage"/>
    <property type="evidence" value="ECO:0007669"/>
    <property type="project" value="UniProtKB-UniRule"/>
</dbReference>
<dbReference type="GO" id="GO:0006166">
    <property type="term" value="P:purine ribonucleoside salvage"/>
    <property type="evidence" value="ECO:0007669"/>
    <property type="project" value="UniProtKB-KW"/>
</dbReference>
<dbReference type="GO" id="GO:0032265">
    <property type="term" value="P:XMP salvage"/>
    <property type="evidence" value="ECO:0007669"/>
    <property type="project" value="UniProtKB-UniRule"/>
</dbReference>
<dbReference type="CDD" id="cd06223">
    <property type="entry name" value="PRTases_typeI"/>
    <property type="match status" value="1"/>
</dbReference>
<dbReference type="Gene3D" id="3.40.50.2020">
    <property type="match status" value="1"/>
</dbReference>
<dbReference type="HAMAP" id="MF_01903">
    <property type="entry name" value="XGPRT"/>
    <property type="match status" value="1"/>
</dbReference>
<dbReference type="InterPro" id="IPR000836">
    <property type="entry name" value="PRibTrfase_dom"/>
</dbReference>
<dbReference type="InterPro" id="IPR029057">
    <property type="entry name" value="PRTase-like"/>
</dbReference>
<dbReference type="InterPro" id="IPR023747">
    <property type="entry name" value="Xanthine_Guanine_PRibTrfase"/>
</dbReference>
<dbReference type="NCBIfam" id="NF006613">
    <property type="entry name" value="PRK09177.1"/>
    <property type="match status" value="1"/>
</dbReference>
<dbReference type="PANTHER" id="PTHR39563">
    <property type="entry name" value="XANTHINE PHOSPHORIBOSYLTRANSFERASE"/>
    <property type="match status" value="1"/>
</dbReference>
<dbReference type="PANTHER" id="PTHR39563:SF1">
    <property type="entry name" value="XANTHINE-GUANINE PHOSPHORIBOSYLTRANSFERASE"/>
    <property type="match status" value="1"/>
</dbReference>
<dbReference type="Pfam" id="PF00156">
    <property type="entry name" value="Pribosyltran"/>
    <property type="match status" value="1"/>
</dbReference>
<dbReference type="SUPFAM" id="SSF53271">
    <property type="entry name" value="PRTase-like"/>
    <property type="match status" value="1"/>
</dbReference>
<name>XGPT_RHIME</name>
<accession>Q92PU1</accession>
<protein>
    <recommendedName>
        <fullName evidence="1">Xanthine-guanine phosphoribosyltransferase</fullName>
        <shortName evidence="1">XGPRT</shortName>
        <ecNumber evidence="1">2.4.2.-</ecNumber>
        <ecNumber evidence="1">2.4.2.22</ecNumber>
    </recommendedName>
    <alternativeName>
        <fullName evidence="1">Xanthine phosphoribosyltransferase</fullName>
    </alternativeName>
</protein>
<proteinExistence type="inferred from homology"/>
<organism>
    <name type="scientific">Rhizobium meliloti (strain 1021)</name>
    <name type="common">Ensifer meliloti</name>
    <name type="synonym">Sinorhizobium meliloti</name>
    <dbReference type="NCBI Taxonomy" id="266834"/>
    <lineage>
        <taxon>Bacteria</taxon>
        <taxon>Pseudomonadati</taxon>
        <taxon>Pseudomonadota</taxon>
        <taxon>Alphaproteobacteria</taxon>
        <taxon>Hyphomicrobiales</taxon>
        <taxon>Rhizobiaceae</taxon>
        <taxon>Sinorhizobium/Ensifer group</taxon>
        <taxon>Sinorhizobium</taxon>
    </lineage>
</organism>
<comment type="function">
    <text evidence="1">Purine salvage pathway enzyme that catalyzes the transfer of the ribosyl-5-phosphate group from 5-phospho-alpha-D-ribose 1-diphosphate (PRPP) to the N9 position of the 6-oxopurines guanine and xanthine to form the corresponding ribonucleotides GMP (guanosine 5'-monophosphate) and XMP (xanthosine 5'-monophosphate), with the release of PPi. To a lesser extent, also acts on hypoxanthine.</text>
</comment>
<comment type="catalytic activity">
    <reaction evidence="1">
        <text>GMP + diphosphate = guanine + 5-phospho-alpha-D-ribose 1-diphosphate</text>
        <dbReference type="Rhea" id="RHEA:25424"/>
        <dbReference type="ChEBI" id="CHEBI:16235"/>
        <dbReference type="ChEBI" id="CHEBI:33019"/>
        <dbReference type="ChEBI" id="CHEBI:58017"/>
        <dbReference type="ChEBI" id="CHEBI:58115"/>
    </reaction>
    <physiologicalReaction direction="right-to-left" evidence="1">
        <dbReference type="Rhea" id="RHEA:25426"/>
    </physiologicalReaction>
</comment>
<comment type="catalytic activity">
    <reaction evidence="1">
        <text>XMP + diphosphate = xanthine + 5-phospho-alpha-D-ribose 1-diphosphate</text>
        <dbReference type="Rhea" id="RHEA:10800"/>
        <dbReference type="ChEBI" id="CHEBI:17712"/>
        <dbReference type="ChEBI" id="CHEBI:33019"/>
        <dbReference type="ChEBI" id="CHEBI:57464"/>
        <dbReference type="ChEBI" id="CHEBI:58017"/>
        <dbReference type="EC" id="2.4.2.22"/>
    </reaction>
    <physiologicalReaction direction="right-to-left" evidence="1">
        <dbReference type="Rhea" id="RHEA:10802"/>
    </physiologicalReaction>
</comment>
<comment type="catalytic activity">
    <reaction evidence="1">
        <text>IMP + diphosphate = hypoxanthine + 5-phospho-alpha-D-ribose 1-diphosphate</text>
        <dbReference type="Rhea" id="RHEA:17973"/>
        <dbReference type="ChEBI" id="CHEBI:17368"/>
        <dbReference type="ChEBI" id="CHEBI:33019"/>
        <dbReference type="ChEBI" id="CHEBI:58017"/>
        <dbReference type="ChEBI" id="CHEBI:58053"/>
    </reaction>
    <physiologicalReaction direction="right-to-left" evidence="1">
        <dbReference type="Rhea" id="RHEA:17975"/>
    </physiologicalReaction>
</comment>
<comment type="cofactor">
    <cofactor evidence="1">
        <name>Mg(2+)</name>
        <dbReference type="ChEBI" id="CHEBI:18420"/>
    </cofactor>
</comment>
<comment type="pathway">
    <text evidence="1">Purine metabolism; GMP biosynthesis via salvage pathway; GMP from guanine: step 1/1.</text>
</comment>
<comment type="pathway">
    <text evidence="1">Purine metabolism; XMP biosynthesis via salvage pathway; XMP from xanthine: step 1/1.</text>
</comment>
<comment type="subunit">
    <text evidence="1">Homotetramer.</text>
</comment>
<comment type="subcellular location">
    <subcellularLocation>
        <location evidence="1">Cell inner membrane</location>
        <topology evidence="1">Peripheral membrane protein</topology>
    </subcellularLocation>
</comment>
<comment type="similarity">
    <text evidence="1">Belongs to the purine/pyrimidine phosphoribosyltransferase family. XGPT subfamily.</text>
</comment>
<keyword id="KW-0997">Cell inner membrane</keyword>
<keyword id="KW-1003">Cell membrane</keyword>
<keyword id="KW-0328">Glycosyltransferase</keyword>
<keyword id="KW-0460">Magnesium</keyword>
<keyword id="KW-0472">Membrane</keyword>
<keyword id="KW-0479">Metal-binding</keyword>
<keyword id="KW-0660">Purine salvage</keyword>
<keyword id="KW-1185">Reference proteome</keyword>
<keyword id="KW-0808">Transferase</keyword>
<sequence>MSLPEKAFPVSWDQFHRDARALAWRLADNGQEWRAMVCITRGGLVPAAIVSRELNIRMIETVCIASYHDYDTQGQMKVLKSISPEIAKDGGEGVLIVDDLTDTGKTAAEVRAMLPRAHFAAVYAKPKGRPLVDTFVTEVSQDTWIYFPWDLGFTYQEPIAKGTRG</sequence>
<evidence type="ECO:0000255" key="1">
    <source>
        <dbReference type="HAMAP-Rule" id="MF_01903"/>
    </source>
</evidence>
<feature type="chain" id="PRO_0000139681" description="Xanthine-guanine phosphoribosyltransferase">
    <location>
        <begin position="1"/>
        <end position="165"/>
    </location>
</feature>
<feature type="binding site" evidence="1">
    <location>
        <begin position="41"/>
        <end position="42"/>
    </location>
    <ligand>
        <name>5-phospho-alpha-D-ribose 1-diphosphate</name>
        <dbReference type="ChEBI" id="CHEBI:58017"/>
    </ligand>
</feature>
<feature type="binding site" evidence="1">
    <location>
        <begin position="98"/>
        <end position="106"/>
    </location>
    <ligand>
        <name>5-phospho-alpha-D-ribose 1-diphosphate</name>
        <dbReference type="ChEBI" id="CHEBI:58017"/>
    </ligand>
</feature>
<feature type="binding site" evidence="1">
    <location>
        <position position="99"/>
    </location>
    <ligand>
        <name>Mg(2+)</name>
        <dbReference type="ChEBI" id="CHEBI:18420"/>
    </ligand>
</feature>
<feature type="binding site" evidence="1">
    <location>
        <begin position="102"/>
        <end position="106"/>
    </location>
    <ligand>
        <name>GMP</name>
        <dbReference type="ChEBI" id="CHEBI:58115"/>
    </ligand>
</feature>
<feature type="binding site" evidence="1">
    <location>
        <position position="102"/>
    </location>
    <ligand>
        <name>guanine</name>
        <dbReference type="ChEBI" id="CHEBI:16235"/>
    </ligand>
</feature>
<feature type="binding site" evidence="1">
    <location>
        <position position="102"/>
    </location>
    <ligand>
        <name>xanthine</name>
        <dbReference type="ChEBI" id="CHEBI:17712"/>
    </ligand>
</feature>
<feature type="binding site" evidence="1">
    <location>
        <begin position="144"/>
        <end position="145"/>
    </location>
    <ligand>
        <name>GMP</name>
        <dbReference type="ChEBI" id="CHEBI:58115"/>
    </ligand>
</feature>
<feature type="binding site" evidence="1">
    <location>
        <position position="145"/>
    </location>
    <ligand>
        <name>guanine</name>
        <dbReference type="ChEBI" id="CHEBI:16235"/>
    </ligand>
</feature>
<feature type="binding site" evidence="1">
    <location>
        <position position="145"/>
    </location>
    <ligand>
        <name>xanthine</name>
        <dbReference type="ChEBI" id="CHEBI:17712"/>
    </ligand>
</feature>
<gene>
    <name evidence="1" type="primary">gpt</name>
    <name type="ordered locus">R01637</name>
    <name type="ORF">SMc00945</name>
</gene>